<keyword id="KW-0002">3D-structure</keyword>
<keyword id="KW-0020">Allergen</keyword>
<keyword id="KW-1015">Disulfide bond</keyword>
<keyword id="KW-0590">Pheromone-binding</keyword>
<keyword id="KW-1185">Reference proteome</keyword>
<keyword id="KW-0964">Secreted</keyword>
<keyword id="KW-0732">Signal</keyword>
<keyword id="KW-0813">Transport</keyword>
<dbReference type="EMBL" id="X03208">
    <property type="protein sequence ID" value="CAA26953.1"/>
    <property type="molecule type" value="Genomic_DNA"/>
</dbReference>
<dbReference type="EMBL" id="AK013259">
    <property type="protein sequence ID" value="BAB28753.1"/>
    <property type="molecule type" value="mRNA"/>
</dbReference>
<dbReference type="EMBL" id="BC013649">
    <property type="protein sequence ID" value="AAH13649.1"/>
    <property type="molecule type" value="mRNA"/>
</dbReference>
<dbReference type="EMBL" id="M17759">
    <property type="protein sequence ID" value="AAA39763.1"/>
    <property type="molecule type" value="Genomic_DNA"/>
</dbReference>
<dbReference type="EMBL" id="Z32546">
    <property type="status" value="NOT_ANNOTATED_CDS"/>
    <property type="molecule type" value="Genomic_DNA"/>
</dbReference>
<dbReference type="EMBL" id="M17818">
    <property type="protein sequence ID" value="AAA40543.1"/>
    <property type="molecule type" value="Genomic_DNA"/>
</dbReference>
<dbReference type="EMBL" id="M17814">
    <property type="protein sequence ID" value="AAA40540.1"/>
    <property type="molecule type" value="Genomic_DNA"/>
</dbReference>
<dbReference type="EMBL" id="M17817">
    <property type="protein sequence ID" value="AAA40544.1"/>
    <property type="molecule type" value="Genomic_DNA"/>
</dbReference>
<dbReference type="EMBL" id="U12201">
    <property type="protein sequence ID" value="AAA99109.1"/>
    <property type="molecule type" value="Genomic_DNA"/>
</dbReference>
<dbReference type="CCDS" id="CCDS51187.2"/>
<dbReference type="CCDS" id="CCDS57278.1"/>
<dbReference type="PIR" id="A03216">
    <property type="entry name" value="UAMS"/>
</dbReference>
<dbReference type="RefSeq" id="NP_001186865.1">
    <property type="nucleotide sequence ID" value="NM_001199936.1"/>
</dbReference>
<dbReference type="RefSeq" id="NP_001268908.1">
    <property type="nucleotide sequence ID" value="NM_001281979.1"/>
</dbReference>
<dbReference type="RefSeq" id="XP_006537551.1">
    <property type="nucleotide sequence ID" value="XM_006537488.2"/>
</dbReference>
<dbReference type="PDB" id="1I04">
    <property type="method" value="X-ray"/>
    <property type="resolution" value="2.00 A"/>
    <property type="chains" value="A=1-180"/>
</dbReference>
<dbReference type="PDB" id="1I05">
    <property type="method" value="X-ray"/>
    <property type="resolution" value="2.00 A"/>
    <property type="chains" value="A=1-180"/>
</dbReference>
<dbReference type="PDB" id="1I06">
    <property type="method" value="X-ray"/>
    <property type="resolution" value="1.90 A"/>
    <property type="chains" value="A=1-180"/>
</dbReference>
<dbReference type="PDB" id="1MUP">
    <property type="method" value="X-ray"/>
    <property type="resolution" value="2.40 A"/>
    <property type="chains" value="A=15-180"/>
</dbReference>
<dbReference type="PDB" id="2LB6">
    <property type="method" value="NMR"/>
    <property type="chains" value="A=19-180"/>
</dbReference>
<dbReference type="PDB" id="2NND">
    <property type="method" value="X-ray"/>
    <property type="resolution" value="1.60 A"/>
    <property type="chains" value="A=19-75, A=82-180"/>
</dbReference>
<dbReference type="PDB" id="2NNE">
    <property type="method" value="X-ray"/>
    <property type="resolution" value="1.60 A"/>
    <property type="chains" value="A=19-75, A=82-180"/>
</dbReference>
<dbReference type="PDBsum" id="1I04"/>
<dbReference type="PDBsum" id="1I05"/>
<dbReference type="PDBsum" id="1I06"/>
<dbReference type="PDBsum" id="1MUP"/>
<dbReference type="PDBsum" id="2LB6"/>
<dbReference type="PDBsum" id="2NND"/>
<dbReference type="PDBsum" id="2NNE"/>
<dbReference type="BMRB" id="P02762"/>
<dbReference type="SMR" id="P02762"/>
<dbReference type="FunCoup" id="P02762">
    <property type="interactions" value="20"/>
</dbReference>
<dbReference type="STRING" id="10090.ENSMUSP00000079442"/>
<dbReference type="Allergome" id="3378">
    <property type="allergen name" value="Mus m 1.0101"/>
</dbReference>
<dbReference type="Allergome" id="478">
    <property type="allergen name" value="Mus m 1"/>
</dbReference>
<dbReference type="Allergome" id="8430">
    <property type="allergen name" value="Mus m 1.0102"/>
</dbReference>
<dbReference type="iPTMnet" id="P02762"/>
<dbReference type="PhosphoSitePlus" id="P02762"/>
<dbReference type="SwissPalm" id="P02762"/>
<dbReference type="jPOST" id="P02762"/>
<dbReference type="PaxDb" id="10090-ENSMUSP00000079442"/>
<dbReference type="Ensembl" id="ENSMUST00000080606.9">
    <property type="protein sequence ID" value="ENSMUSP00000079442.3"/>
    <property type="gene ID" value="ENSMUSG00000078673.11"/>
</dbReference>
<dbReference type="Ensembl" id="ENSMUST00000095051.6">
    <property type="protein sequence ID" value="ENSMUSP00000092661.6"/>
    <property type="gene ID" value="ENSMUSG00000078675.10"/>
</dbReference>
<dbReference type="Ensembl" id="ENSMUST00000107483.8">
    <property type="protein sequence ID" value="ENSMUSP00000103107.2"/>
    <property type="gene ID" value="ENSMUSG00000078675.10"/>
</dbReference>
<dbReference type="Ensembl" id="ENSMUST00000107506.9">
    <property type="protein sequence ID" value="ENSMUSP00000103130.3"/>
    <property type="gene ID" value="ENSMUSG00000078686.12"/>
</dbReference>
<dbReference type="Ensembl" id="ENSMUST00000122381.8">
    <property type="protein sequence ID" value="ENSMUSP00000113741.2"/>
    <property type="gene ID" value="ENSMUSG00000078686.12"/>
</dbReference>
<dbReference type="GeneID" id="100038948"/>
<dbReference type="GeneID" id="100039177"/>
<dbReference type="GeneID" id="100189605"/>
<dbReference type="KEGG" id="mmu:100038948"/>
<dbReference type="KEGG" id="mmu:100039177"/>
<dbReference type="KEGG" id="mmu:100189605"/>
<dbReference type="UCSC" id="uc008tak.3">
    <property type="organism name" value="mouse"/>
</dbReference>
<dbReference type="CTD" id="100038948"/>
<dbReference type="CTD" id="100039177"/>
<dbReference type="CTD" id="100189605"/>
<dbReference type="VEuPathDB" id="HostDB:ENSMUSG00000078673"/>
<dbReference type="VEuPathDB" id="HostDB:ENSMUSG00000078675"/>
<dbReference type="VEuPathDB" id="HostDB:ENSMUSG00000078686"/>
<dbReference type="eggNOG" id="ENOG502S6GK">
    <property type="taxonomic scope" value="Eukaryota"/>
</dbReference>
<dbReference type="GeneTree" id="ENSGT01050000244868"/>
<dbReference type="HOGENOM" id="CLU_094061_4_0_1"/>
<dbReference type="InParanoid" id="P02762"/>
<dbReference type="OMA" id="RWGSEND"/>
<dbReference type="PhylomeDB" id="P02762"/>
<dbReference type="TreeFam" id="TF338197"/>
<dbReference type="BioGRID-ORCS" id="100038948">
    <property type="hits" value="3 hits in 29 CRISPR screens"/>
</dbReference>
<dbReference type="BioGRID-ORCS" id="100039177">
    <property type="hits" value="3 hits in 30 CRISPR screens"/>
</dbReference>
<dbReference type="BioGRID-ORCS" id="100189605">
    <property type="hits" value="4 hits in 34 CRISPR screens"/>
</dbReference>
<dbReference type="EvolutionaryTrace" id="P02762"/>
<dbReference type="PRO" id="PR:P02762"/>
<dbReference type="Proteomes" id="UP000000589">
    <property type="component" value="Chromosome 4"/>
</dbReference>
<dbReference type="RNAct" id="P02762">
    <property type="molecule type" value="protein"/>
</dbReference>
<dbReference type="Bgee" id="ENSMUSG00000078673">
    <property type="expression patterns" value="Expressed in quadriceps femoris and 25 other cell types or tissues"/>
</dbReference>
<dbReference type="ExpressionAtlas" id="P02762">
    <property type="expression patterns" value="baseline and differential"/>
</dbReference>
<dbReference type="GO" id="GO:0005829">
    <property type="term" value="C:cytosol"/>
    <property type="evidence" value="ECO:0000250"/>
    <property type="project" value="UniProtKB"/>
</dbReference>
<dbReference type="GO" id="GO:0005615">
    <property type="term" value="C:extracellular space"/>
    <property type="evidence" value="ECO:0000250"/>
    <property type="project" value="UniProtKB"/>
</dbReference>
<dbReference type="GO" id="GO:0005634">
    <property type="term" value="C:nucleus"/>
    <property type="evidence" value="ECO:0000250"/>
    <property type="project" value="UniProtKB"/>
</dbReference>
<dbReference type="GO" id="GO:0005009">
    <property type="term" value="F:insulin receptor activity"/>
    <property type="evidence" value="ECO:0000250"/>
    <property type="project" value="UniProtKB"/>
</dbReference>
<dbReference type="GO" id="GO:0005549">
    <property type="term" value="F:odorant binding"/>
    <property type="evidence" value="ECO:0000318"/>
    <property type="project" value="GO_Central"/>
</dbReference>
<dbReference type="GO" id="GO:0005550">
    <property type="term" value="F:pheromone binding"/>
    <property type="evidence" value="ECO:0000250"/>
    <property type="project" value="UniProtKB"/>
</dbReference>
<dbReference type="GO" id="GO:0036094">
    <property type="term" value="F:small molecule binding"/>
    <property type="evidence" value="ECO:0007669"/>
    <property type="project" value="InterPro"/>
</dbReference>
<dbReference type="GO" id="GO:0009060">
    <property type="term" value="P:aerobic respiration"/>
    <property type="evidence" value="ECO:0000250"/>
    <property type="project" value="UniProtKB"/>
</dbReference>
<dbReference type="GO" id="GO:0071396">
    <property type="term" value="P:cellular response to lipid"/>
    <property type="evidence" value="ECO:0000250"/>
    <property type="project" value="UniProtKB"/>
</dbReference>
<dbReference type="GO" id="GO:0006112">
    <property type="term" value="P:energy reserve metabolic process"/>
    <property type="evidence" value="ECO:0000250"/>
    <property type="project" value="UniProtKB"/>
</dbReference>
<dbReference type="GO" id="GO:0042593">
    <property type="term" value="P:glucose homeostasis"/>
    <property type="evidence" value="ECO:0000250"/>
    <property type="project" value="UniProtKB"/>
</dbReference>
<dbReference type="GO" id="GO:0031649">
    <property type="term" value="P:heat generation"/>
    <property type="evidence" value="ECO:0000250"/>
    <property type="project" value="UniProtKB"/>
</dbReference>
<dbReference type="GO" id="GO:0045475">
    <property type="term" value="P:locomotor rhythm"/>
    <property type="evidence" value="ECO:0000250"/>
    <property type="project" value="UniProtKB"/>
</dbReference>
<dbReference type="GO" id="GO:0007005">
    <property type="term" value="P:mitochondrion organization"/>
    <property type="evidence" value="ECO:0000250"/>
    <property type="project" value="UniProtKB"/>
</dbReference>
<dbReference type="GO" id="GO:0045892">
    <property type="term" value="P:negative regulation of DNA-templated transcription"/>
    <property type="evidence" value="ECO:0000250"/>
    <property type="project" value="UniProtKB"/>
</dbReference>
<dbReference type="GO" id="GO:0045721">
    <property type="term" value="P:negative regulation of gluconeogenesis"/>
    <property type="evidence" value="ECO:0000250"/>
    <property type="project" value="UniProtKB"/>
</dbReference>
<dbReference type="GO" id="GO:0061179">
    <property type="term" value="P:negative regulation of insulin secretion involved in cellular response to glucose stimulus"/>
    <property type="evidence" value="ECO:0000250"/>
    <property type="project" value="UniProtKB"/>
</dbReference>
<dbReference type="GO" id="GO:0051055">
    <property type="term" value="P:negative regulation of lipid biosynthetic process"/>
    <property type="evidence" value="ECO:0000250"/>
    <property type="project" value="UniProtKB"/>
</dbReference>
<dbReference type="GO" id="GO:0010888">
    <property type="term" value="P:negative regulation of lipid storage"/>
    <property type="evidence" value="ECO:0000250"/>
    <property type="project" value="UniProtKB"/>
</dbReference>
<dbReference type="GO" id="GO:0010628">
    <property type="term" value="P:positive regulation of gene expression"/>
    <property type="evidence" value="ECO:0000250"/>
    <property type="project" value="UniProtKB"/>
</dbReference>
<dbReference type="GO" id="GO:0010907">
    <property type="term" value="P:positive regulation of glucose metabolic process"/>
    <property type="evidence" value="ECO:0000250"/>
    <property type="project" value="UniProtKB"/>
</dbReference>
<dbReference type="GO" id="GO:0045834">
    <property type="term" value="P:positive regulation of lipid metabolic process"/>
    <property type="evidence" value="ECO:0000250"/>
    <property type="project" value="UniProtKB"/>
</dbReference>
<dbReference type="GO" id="GO:0051897">
    <property type="term" value="P:positive regulation of phosphatidylinositol 3-kinase/protein kinase B signal transduction"/>
    <property type="evidence" value="ECO:0000250"/>
    <property type="project" value="UniProtKB"/>
</dbReference>
<dbReference type="CDD" id="cd19428">
    <property type="entry name" value="lipocalin_MUP-like"/>
    <property type="match status" value="1"/>
</dbReference>
<dbReference type="FunFam" id="2.40.128.20:FF:000008">
    <property type="entry name" value="Major urinary protein"/>
    <property type="match status" value="1"/>
</dbReference>
<dbReference type="Gene3D" id="2.40.128.20">
    <property type="match status" value="1"/>
</dbReference>
<dbReference type="InterPro" id="IPR012674">
    <property type="entry name" value="Calycin"/>
</dbReference>
<dbReference type="InterPro" id="IPR002345">
    <property type="entry name" value="Lipocalin"/>
</dbReference>
<dbReference type="InterPro" id="IPR022272">
    <property type="entry name" value="Lipocalin_CS"/>
</dbReference>
<dbReference type="InterPro" id="IPR000566">
    <property type="entry name" value="Lipocln_cytosolic_FA-bd_dom"/>
</dbReference>
<dbReference type="InterPro" id="IPR002971">
    <property type="entry name" value="Maj_urinary"/>
</dbReference>
<dbReference type="PANTHER" id="PTHR11430">
    <property type="entry name" value="LIPOCALIN"/>
    <property type="match status" value="1"/>
</dbReference>
<dbReference type="PANTHER" id="PTHR11430:SF76">
    <property type="entry name" value="MAJOR URINARY PROTEIN 1-RELATED"/>
    <property type="match status" value="1"/>
</dbReference>
<dbReference type="Pfam" id="PF00061">
    <property type="entry name" value="Lipocalin"/>
    <property type="match status" value="1"/>
</dbReference>
<dbReference type="PRINTS" id="PR00179">
    <property type="entry name" value="LIPOCALIN"/>
</dbReference>
<dbReference type="PRINTS" id="PR01221">
    <property type="entry name" value="MAJORURINARY"/>
</dbReference>
<dbReference type="SUPFAM" id="SSF50814">
    <property type="entry name" value="Lipocalins"/>
    <property type="match status" value="1"/>
</dbReference>
<dbReference type="PROSITE" id="PS00213">
    <property type="entry name" value="LIPOCALIN"/>
    <property type="match status" value="1"/>
</dbReference>
<evidence type="ECO:0000305" key="1"/>
<evidence type="ECO:0007829" key="2">
    <source>
        <dbReference type="PDB" id="1I04"/>
    </source>
</evidence>
<evidence type="ECO:0007829" key="3">
    <source>
        <dbReference type="PDB" id="1I06"/>
    </source>
</evidence>
<evidence type="ECO:0007829" key="4">
    <source>
        <dbReference type="PDB" id="2NND"/>
    </source>
</evidence>
<comment type="function">
    <text>Binds pheromones that are released from drying urine of males. These pheromones affect the sexual behavior of females.</text>
</comment>
<comment type="subcellular location">
    <subcellularLocation>
        <location>Secreted</location>
    </subcellularLocation>
</comment>
<comment type="tissue specificity">
    <text>Abundant in the urine of adult male mice but absent from that of females.</text>
</comment>
<comment type="allergen">
    <text>Causes an allergic reaction in human.</text>
</comment>
<comment type="miscellaneous">
    <text>There are about 15 group 1 MUP genes and their transcripts make up about 5% of male mouse liver RNA.</text>
</comment>
<comment type="similarity">
    <text evidence="1">Belongs to the calycin superfamily. Lipocalin family.</text>
</comment>
<name>MUP6_MOUSE</name>
<feature type="signal peptide">
    <location>
        <begin position="1"/>
        <end position="18"/>
    </location>
</feature>
<feature type="chain" id="PRO_0000017932" description="Major urinary protein 6">
    <location>
        <begin position="19"/>
        <end position="180"/>
    </location>
</feature>
<feature type="disulfide bond">
    <location>
        <begin position="82"/>
        <end position="175"/>
    </location>
</feature>
<feature type="sequence conflict" description="In Ref. 1; CAA26953." evidence="1" ref="1">
    <original>S</original>
    <variation>M</variation>
    <location>
        <position position="145"/>
    </location>
</feature>
<feature type="sequence conflict" description="In Ref. 9; AAA99109." evidence="1" ref="9">
    <original>E</original>
    <variation>K</variation>
    <location>
        <position position="158"/>
    </location>
</feature>
<feature type="strand" evidence="2">
    <location>
        <begin position="23"/>
        <end position="27"/>
    </location>
</feature>
<feature type="helix" evidence="4">
    <location>
        <begin position="30"/>
        <end position="33"/>
    </location>
</feature>
<feature type="strand" evidence="4">
    <location>
        <begin position="38"/>
        <end position="46"/>
    </location>
</feature>
<feature type="helix" evidence="4">
    <location>
        <begin position="47"/>
        <end position="50"/>
    </location>
</feature>
<feature type="strand" evidence="4">
    <location>
        <begin position="59"/>
        <end position="65"/>
    </location>
</feature>
<feature type="strand" evidence="4">
    <location>
        <begin position="67"/>
        <end position="75"/>
    </location>
</feature>
<feature type="strand" evidence="4">
    <location>
        <begin position="84"/>
        <end position="91"/>
    </location>
</feature>
<feature type="strand" evidence="4">
    <location>
        <begin position="98"/>
        <end position="113"/>
    </location>
</feature>
<feature type="strand" evidence="4">
    <location>
        <begin position="115"/>
        <end position="127"/>
    </location>
</feature>
<feature type="strand" evidence="4">
    <location>
        <begin position="130"/>
        <end position="142"/>
    </location>
</feature>
<feature type="helix" evidence="4">
    <location>
        <begin position="146"/>
        <end position="158"/>
    </location>
</feature>
<feature type="helix" evidence="4">
    <location>
        <begin position="163"/>
        <end position="165"/>
    </location>
</feature>
<feature type="strand" evidence="4">
    <location>
        <begin position="166"/>
        <end position="168"/>
    </location>
</feature>
<feature type="turn" evidence="3">
    <location>
        <begin position="170"/>
        <end position="172"/>
    </location>
</feature>
<accession>P02762</accession>
<accession>P70119</accession>
<accession>Q78EF5</accession>
<accession>Q91V46</accession>
<proteinExistence type="evidence at protein level"/>
<gene>
    <name type="primary">Mup6</name>
</gene>
<organism>
    <name type="scientific">Mus musculus</name>
    <name type="common">Mouse</name>
    <dbReference type="NCBI Taxonomy" id="10090"/>
    <lineage>
        <taxon>Eukaryota</taxon>
        <taxon>Metazoa</taxon>
        <taxon>Chordata</taxon>
        <taxon>Craniata</taxon>
        <taxon>Vertebrata</taxon>
        <taxon>Euteleostomi</taxon>
        <taxon>Mammalia</taxon>
        <taxon>Eutheria</taxon>
        <taxon>Euarchontoglires</taxon>
        <taxon>Glires</taxon>
        <taxon>Rodentia</taxon>
        <taxon>Myomorpha</taxon>
        <taxon>Muroidea</taxon>
        <taxon>Muridae</taxon>
        <taxon>Murinae</taxon>
        <taxon>Mus</taxon>
        <taxon>Mus</taxon>
    </lineage>
</organism>
<sequence>MKMLLLLCLGLTLVCVHAEEASSTGRNFNVEKINGEWHTIILASDKREKIEDNGNFRLFLEQIHVLENSLVLKFHTVRDEECSELSMVADKTEKAGEYSVTYDGFNTFTIPKTDYDNFLMAHLINEKDGETFQLMGLYGREPDLSSDIKERFAQLCEEHGILRENIIDLSNANRCLQARE</sequence>
<reference key="1">
    <citation type="journal article" date="1985" name="EMBO J.">
        <title>Sequence structures of a mouse major urinary protein gene and pseudogene compared.</title>
        <authorList>
            <person name="Clark A.J."/>
            <person name="Ghazal P."/>
            <person name="Bingham R.W."/>
            <person name="Barrett D."/>
            <person name="Bishop J.O."/>
        </authorList>
    </citation>
    <scope>NUCLEOTIDE SEQUENCE [GENOMIC DNA]</scope>
</reference>
<reference key="2">
    <citation type="journal article" date="1984" name="EMBO J.">
        <title>Structure of mouse major urinary protein genes: different splicing configurations in the 3'-non-coding region.</title>
        <authorList>
            <person name="Clark A.J."/>
            <person name="Clissold P.M."/>
            <person name="Shawi R.A."/>
            <person name="Beattie P."/>
            <person name="Bishop J.O."/>
        </authorList>
    </citation>
    <scope>NUCLEOTIDE SEQUENCE [GENOMIC DNA]</scope>
</reference>
<reference key="3">
    <citation type="journal article" date="2005" name="Science">
        <title>The transcriptional landscape of the mammalian genome.</title>
        <authorList>
            <person name="Carninci P."/>
            <person name="Kasukawa T."/>
            <person name="Katayama S."/>
            <person name="Gough J."/>
            <person name="Frith M.C."/>
            <person name="Maeda N."/>
            <person name="Oyama R."/>
            <person name="Ravasi T."/>
            <person name="Lenhard B."/>
            <person name="Wells C."/>
            <person name="Kodzius R."/>
            <person name="Shimokawa K."/>
            <person name="Bajic V.B."/>
            <person name="Brenner S.E."/>
            <person name="Batalov S."/>
            <person name="Forrest A.R."/>
            <person name="Zavolan M."/>
            <person name="Davis M.J."/>
            <person name="Wilming L.G."/>
            <person name="Aidinis V."/>
            <person name="Allen J.E."/>
            <person name="Ambesi-Impiombato A."/>
            <person name="Apweiler R."/>
            <person name="Aturaliya R.N."/>
            <person name="Bailey T.L."/>
            <person name="Bansal M."/>
            <person name="Baxter L."/>
            <person name="Beisel K.W."/>
            <person name="Bersano T."/>
            <person name="Bono H."/>
            <person name="Chalk A.M."/>
            <person name="Chiu K.P."/>
            <person name="Choudhary V."/>
            <person name="Christoffels A."/>
            <person name="Clutterbuck D.R."/>
            <person name="Crowe M.L."/>
            <person name="Dalla E."/>
            <person name="Dalrymple B.P."/>
            <person name="de Bono B."/>
            <person name="Della Gatta G."/>
            <person name="di Bernardo D."/>
            <person name="Down T."/>
            <person name="Engstrom P."/>
            <person name="Fagiolini M."/>
            <person name="Faulkner G."/>
            <person name="Fletcher C.F."/>
            <person name="Fukushima T."/>
            <person name="Furuno M."/>
            <person name="Futaki S."/>
            <person name="Gariboldi M."/>
            <person name="Georgii-Hemming P."/>
            <person name="Gingeras T.R."/>
            <person name="Gojobori T."/>
            <person name="Green R.E."/>
            <person name="Gustincich S."/>
            <person name="Harbers M."/>
            <person name="Hayashi Y."/>
            <person name="Hensch T.K."/>
            <person name="Hirokawa N."/>
            <person name="Hill D."/>
            <person name="Huminiecki L."/>
            <person name="Iacono M."/>
            <person name="Ikeo K."/>
            <person name="Iwama A."/>
            <person name="Ishikawa T."/>
            <person name="Jakt M."/>
            <person name="Kanapin A."/>
            <person name="Katoh M."/>
            <person name="Kawasawa Y."/>
            <person name="Kelso J."/>
            <person name="Kitamura H."/>
            <person name="Kitano H."/>
            <person name="Kollias G."/>
            <person name="Krishnan S.P."/>
            <person name="Kruger A."/>
            <person name="Kummerfeld S.K."/>
            <person name="Kurochkin I.V."/>
            <person name="Lareau L.F."/>
            <person name="Lazarevic D."/>
            <person name="Lipovich L."/>
            <person name="Liu J."/>
            <person name="Liuni S."/>
            <person name="McWilliam S."/>
            <person name="Madan Babu M."/>
            <person name="Madera M."/>
            <person name="Marchionni L."/>
            <person name="Matsuda H."/>
            <person name="Matsuzawa S."/>
            <person name="Miki H."/>
            <person name="Mignone F."/>
            <person name="Miyake S."/>
            <person name="Morris K."/>
            <person name="Mottagui-Tabar S."/>
            <person name="Mulder N."/>
            <person name="Nakano N."/>
            <person name="Nakauchi H."/>
            <person name="Ng P."/>
            <person name="Nilsson R."/>
            <person name="Nishiguchi S."/>
            <person name="Nishikawa S."/>
            <person name="Nori F."/>
            <person name="Ohara O."/>
            <person name="Okazaki Y."/>
            <person name="Orlando V."/>
            <person name="Pang K.C."/>
            <person name="Pavan W.J."/>
            <person name="Pavesi G."/>
            <person name="Pesole G."/>
            <person name="Petrovsky N."/>
            <person name="Piazza S."/>
            <person name="Reed J."/>
            <person name="Reid J.F."/>
            <person name="Ring B.Z."/>
            <person name="Ringwald M."/>
            <person name="Rost B."/>
            <person name="Ruan Y."/>
            <person name="Salzberg S.L."/>
            <person name="Sandelin A."/>
            <person name="Schneider C."/>
            <person name="Schoenbach C."/>
            <person name="Sekiguchi K."/>
            <person name="Semple C.A."/>
            <person name="Seno S."/>
            <person name="Sessa L."/>
            <person name="Sheng Y."/>
            <person name="Shibata Y."/>
            <person name="Shimada H."/>
            <person name="Shimada K."/>
            <person name="Silva D."/>
            <person name="Sinclair B."/>
            <person name="Sperling S."/>
            <person name="Stupka E."/>
            <person name="Sugiura K."/>
            <person name="Sultana R."/>
            <person name="Takenaka Y."/>
            <person name="Taki K."/>
            <person name="Tammoja K."/>
            <person name="Tan S.L."/>
            <person name="Tang S."/>
            <person name="Taylor M.S."/>
            <person name="Tegner J."/>
            <person name="Teichmann S.A."/>
            <person name="Ueda H.R."/>
            <person name="van Nimwegen E."/>
            <person name="Verardo R."/>
            <person name="Wei C.L."/>
            <person name="Yagi K."/>
            <person name="Yamanishi H."/>
            <person name="Zabarovsky E."/>
            <person name="Zhu S."/>
            <person name="Zimmer A."/>
            <person name="Hide W."/>
            <person name="Bult C."/>
            <person name="Grimmond S.M."/>
            <person name="Teasdale R.D."/>
            <person name="Liu E.T."/>
            <person name="Brusic V."/>
            <person name="Quackenbush J."/>
            <person name="Wahlestedt C."/>
            <person name="Mattick J.S."/>
            <person name="Hume D.A."/>
            <person name="Kai C."/>
            <person name="Sasaki D."/>
            <person name="Tomaru Y."/>
            <person name="Fukuda S."/>
            <person name="Kanamori-Katayama M."/>
            <person name="Suzuki M."/>
            <person name="Aoki J."/>
            <person name="Arakawa T."/>
            <person name="Iida J."/>
            <person name="Imamura K."/>
            <person name="Itoh M."/>
            <person name="Kato T."/>
            <person name="Kawaji H."/>
            <person name="Kawagashira N."/>
            <person name="Kawashima T."/>
            <person name="Kojima M."/>
            <person name="Kondo S."/>
            <person name="Konno H."/>
            <person name="Nakano K."/>
            <person name="Ninomiya N."/>
            <person name="Nishio T."/>
            <person name="Okada M."/>
            <person name="Plessy C."/>
            <person name="Shibata K."/>
            <person name="Shiraki T."/>
            <person name="Suzuki S."/>
            <person name="Tagami M."/>
            <person name="Waki K."/>
            <person name="Watahiki A."/>
            <person name="Okamura-Oho Y."/>
            <person name="Suzuki H."/>
            <person name="Kawai J."/>
            <person name="Hayashizaki Y."/>
        </authorList>
    </citation>
    <scope>NUCLEOTIDE SEQUENCE [LARGE SCALE MRNA]</scope>
    <source>
        <strain>C57BL/6J</strain>
    </source>
</reference>
<reference key="4">
    <citation type="journal article" date="2004" name="Genome Res.">
        <title>The status, quality, and expansion of the NIH full-length cDNA project: the Mammalian Gene Collection (MGC).</title>
        <authorList>
            <consortium name="The MGC Project Team"/>
        </authorList>
    </citation>
    <scope>NUCLEOTIDE SEQUENCE [LARGE SCALE MRNA]</scope>
    <source>
        <strain>FVB/N</strain>
        <tissue>Liver</tissue>
    </source>
</reference>
<reference key="5">
    <citation type="journal article" date="1985" name="Proc. Natl. Acad. Sci. U.S.A.">
        <title>Evolutionary amplification of a pseudogene.</title>
        <authorList>
            <person name="Ghazal P."/>
            <person name="Clark J.A."/>
            <person name="Bishop J."/>
        </authorList>
    </citation>
    <scope>NUCLEOTIDE SEQUENCE [GENOMIC DNA] OF 1-32</scope>
</reference>
<reference key="6">
    <citation type="journal article" date="1994" name="Nucleic Acids Res.">
        <title>Isolation of genomic DNA fragments corresponding to genes modulated in vivo by a transcription factor.</title>
        <authorList>
            <person name="Caubin J."/>
            <person name="Iglesias T."/>
            <person name="Bernal J."/>
            <person name="Munoz A."/>
            <person name="Marquez G."/>
            <person name="Barbero J.L."/>
            <person name="Zaballos A."/>
        </authorList>
    </citation>
    <scope>NUCLEOTIDE SEQUENCE OF 1-32</scope>
</reference>
<reference key="7">
    <citation type="journal article" date="1987" name="Mol. Cell. Biol.">
        <title>Identification and characterization of functional genes encoding the mouse major urinary proteins.</title>
        <authorList>
            <person name="Held W.A."/>
            <person name="Gallagher J.F."/>
            <person name="Hohman C.M."/>
            <person name="Kuhn N.J."/>
            <person name="Sampsell B.M."/>
            <person name="Hughes R.G. Jr."/>
        </authorList>
    </citation>
    <scope>NUCLEOTIDE SEQUENCE [GENOMIC DNA] OF 1-10</scope>
</reference>
<reference key="8">
    <citation type="journal article" date="1982" name="J. Cell Biol.">
        <title>Structural genes of the mouse major urinary protein are on chromosome 4.</title>
        <authorList>
            <person name="Krauter K."/>
            <person name="Leinwand L."/>
            <person name="D'Eustachio P."/>
            <person name="Ruddle F."/>
            <person name="Darnell J.E. Jr."/>
        </authorList>
    </citation>
    <scope>NUCLEOTIDE SEQUENCE OF 20-41</scope>
</reference>
<reference key="9">
    <citation type="journal article" date="1994" name="Mol. Cell. Biol.">
        <title>Nonsense but not missense mutations can decrease the abundance of nuclear mRNA for the mouse major urinary protein, while both types of mutations can facilitate exon skipping.</title>
        <authorList>
            <person name="Belgrader P."/>
            <person name="Maquat L.E."/>
        </authorList>
    </citation>
    <scope>NUCLEOTIDE SEQUENCE [GENOMIC DNA] OF 134-180</scope>
</reference>
<reference key="10">
    <citation type="journal article" date="1992" name="Nature">
        <title>Pheromone binding to two rodent urinary proteins revealed by X-ray crystallography.</title>
        <authorList>
            <person name="Boecksel Z."/>
            <person name="Groom C.R."/>
            <person name="Flower D.R."/>
            <person name="Wright C.E."/>
            <person name="Phillips S.E.V."/>
            <person name="Cavaggioni A."/>
            <person name="Findlay J.B.C."/>
            <person name="North A.C.T."/>
        </authorList>
    </citation>
    <scope>X-RAY CRYSTALLOGRAPHY (2.4 ANGSTROMS)</scope>
</reference>
<reference key="11">
    <citation type="journal article" date="2001" name="Protein Sci.">
        <title>Structural basis of pheromone binding to mouse major urinary protein (MUP-I).</title>
        <authorList>
            <person name="Timm D.E."/>
            <person name="Baker L.-J."/>
            <person name="Mueller H."/>
            <person name="Zidek L."/>
            <person name="Novotny M.V."/>
        </authorList>
    </citation>
    <scope>X-RAY CRYSTALLOGRAPHY (1.9 ANGSTROMS)</scope>
</reference>
<reference key="12">
    <citation type="journal article" date="2004" name="J. Am. Chem. Soc.">
        <title>Thermodynamics of binding of 2-methoxy-3-isopropylpyrazine and 2-methoxy-3-isobutylpyrazine to the major urinary protein.</title>
        <authorList>
            <person name="Bingham R.J."/>
            <person name="Findlay J.B."/>
            <person name="Hsieh S.-Y."/>
            <person name="Kalverda A.P."/>
            <person name="Kjellberg A."/>
            <person name="Perazzolo C."/>
            <person name="Phillips S.E."/>
            <person name="Seshadri K."/>
            <person name="Trinh C.H."/>
            <person name="Turnbull W.B."/>
            <person name="Bodenhausen G."/>
            <person name="Homans S.W."/>
        </authorList>
    </citation>
    <scope>X-RAY CRYSTALLOGRAPHY (1.8 ANGSTROMS)</scope>
</reference>
<protein>
    <recommendedName>
        <fullName>Major urinary protein 6</fullName>
        <shortName>MUP 6</shortName>
    </recommendedName>
    <alternativeName>
        <fullName>Alpha-2U-globulin</fullName>
    </alternativeName>
    <alternativeName>
        <fullName>Group 1, BS6</fullName>
    </alternativeName>
    <allergenName>Mus m 1</allergenName>
</protein>